<feature type="chain" id="PRO_1000006413" description="Glycine--tRNA ligase beta subunit">
    <location>
        <begin position="1"/>
        <end position="689"/>
    </location>
</feature>
<comment type="catalytic activity">
    <reaction evidence="1">
        <text>tRNA(Gly) + glycine + ATP = glycyl-tRNA(Gly) + AMP + diphosphate</text>
        <dbReference type="Rhea" id="RHEA:16013"/>
        <dbReference type="Rhea" id="RHEA-COMP:9664"/>
        <dbReference type="Rhea" id="RHEA-COMP:9683"/>
        <dbReference type="ChEBI" id="CHEBI:30616"/>
        <dbReference type="ChEBI" id="CHEBI:33019"/>
        <dbReference type="ChEBI" id="CHEBI:57305"/>
        <dbReference type="ChEBI" id="CHEBI:78442"/>
        <dbReference type="ChEBI" id="CHEBI:78522"/>
        <dbReference type="ChEBI" id="CHEBI:456215"/>
        <dbReference type="EC" id="6.1.1.14"/>
    </reaction>
</comment>
<comment type="subunit">
    <text evidence="1">Tetramer of two alpha and two beta subunits.</text>
</comment>
<comment type="subcellular location">
    <subcellularLocation>
        <location evidence="1">Cytoplasm</location>
    </subcellularLocation>
</comment>
<comment type="similarity">
    <text evidence="1">Belongs to the class-II aminoacyl-tRNA synthetase family.</text>
</comment>
<sequence>MSEKTFLVEIGTEELPPKALRSLAESFAANFTAELDNAGLAHGTVQWFAAPRRLALKVANLAEAQPDREIEKRGPAIAQAFDAEGKPSKAAEGWARGCGITVDQAERLTTDKGEWLLYRAHVKGESTEALLPNMVATSLAKLPIPKLMRWGASDVHFVRPVHTVTLLLGDKVIPATILGIQSDRVIRGHRFMGEPEFTIDNADQYPEILRERGKVIADYEERKAKIKADAEEAARKIGGNADLSESLLEEVASLVEWPVVLTAKFEEKFLAVPAEALVYTMKGDQKYFPVYANDGKLLPNFIFVANIESKDPQQIISGNEKVVRPRLADAEFFFNTDRKKRLEDNLPRLQTVLFQQQLGTLRDKTDRIQALAGWIAEQIGADVNHATRAGLLSKCDLMTNMVFEFTDTQGVMGMHYARHDGEAEDVAVALNEQYQPRFAGDDLPSNPVACALAIADKMDTLAGIFGIGQHPKGDKDPFALRRAALGVLRIIVEKNLNLDLQTLTEEAVRLYGDKLTNANVVDDVIDFMLGRFRAWYQDEGYTVDTIQAVLARRPTRPADFDARMKAVSHFRTLEAAAALAAANKRVSNILAKSDEVLSDRVNASTLKEPEEIKLAMQVVVLRDKLEPYFAEGRYQDALVELAELREPVDAFFDKVMVMVDDKELRLNRLTMLEKLRELFLRVADISLLQ</sequence>
<name>SYGB_SHIF8</name>
<proteinExistence type="inferred from homology"/>
<protein>
    <recommendedName>
        <fullName evidence="1">Glycine--tRNA ligase beta subunit</fullName>
        <ecNumber evidence="1">6.1.1.14</ecNumber>
    </recommendedName>
    <alternativeName>
        <fullName evidence="1">Glycyl-tRNA synthetase beta subunit</fullName>
        <shortName evidence="1">GlyRS</shortName>
    </alternativeName>
</protein>
<keyword id="KW-0030">Aminoacyl-tRNA synthetase</keyword>
<keyword id="KW-0067">ATP-binding</keyword>
<keyword id="KW-0963">Cytoplasm</keyword>
<keyword id="KW-0436">Ligase</keyword>
<keyword id="KW-0547">Nucleotide-binding</keyword>
<keyword id="KW-0648">Protein biosynthesis</keyword>
<reference key="1">
    <citation type="journal article" date="2006" name="BMC Genomics">
        <title>Complete genome sequence of Shigella flexneri 5b and comparison with Shigella flexneri 2a.</title>
        <authorList>
            <person name="Nie H."/>
            <person name="Yang F."/>
            <person name="Zhang X."/>
            <person name="Yang J."/>
            <person name="Chen L."/>
            <person name="Wang J."/>
            <person name="Xiong Z."/>
            <person name="Peng J."/>
            <person name="Sun L."/>
            <person name="Dong J."/>
            <person name="Xue Y."/>
            <person name="Xu X."/>
            <person name="Chen S."/>
            <person name="Yao Z."/>
            <person name="Shen Y."/>
            <person name="Jin Q."/>
        </authorList>
    </citation>
    <scope>NUCLEOTIDE SEQUENCE [LARGE SCALE GENOMIC DNA]</scope>
    <source>
        <strain>8401</strain>
    </source>
</reference>
<organism>
    <name type="scientific">Shigella flexneri serotype 5b (strain 8401)</name>
    <dbReference type="NCBI Taxonomy" id="373384"/>
    <lineage>
        <taxon>Bacteria</taxon>
        <taxon>Pseudomonadati</taxon>
        <taxon>Pseudomonadota</taxon>
        <taxon>Gammaproteobacteria</taxon>
        <taxon>Enterobacterales</taxon>
        <taxon>Enterobacteriaceae</taxon>
        <taxon>Shigella</taxon>
    </lineage>
</organism>
<accession>Q0SY78</accession>
<dbReference type="EC" id="6.1.1.14" evidence="1"/>
<dbReference type="EMBL" id="CP000266">
    <property type="protein sequence ID" value="ABF05987.1"/>
    <property type="molecule type" value="Genomic_DNA"/>
</dbReference>
<dbReference type="RefSeq" id="WP_001291774.1">
    <property type="nucleotide sequence ID" value="NC_008258.1"/>
</dbReference>
<dbReference type="SMR" id="Q0SY78"/>
<dbReference type="KEGG" id="sfv:SFV_3982"/>
<dbReference type="HOGENOM" id="CLU_007220_2_2_6"/>
<dbReference type="Proteomes" id="UP000000659">
    <property type="component" value="Chromosome"/>
</dbReference>
<dbReference type="GO" id="GO:0005829">
    <property type="term" value="C:cytosol"/>
    <property type="evidence" value="ECO:0007669"/>
    <property type="project" value="TreeGrafter"/>
</dbReference>
<dbReference type="GO" id="GO:0004814">
    <property type="term" value="F:arginine-tRNA ligase activity"/>
    <property type="evidence" value="ECO:0007669"/>
    <property type="project" value="InterPro"/>
</dbReference>
<dbReference type="GO" id="GO:0005524">
    <property type="term" value="F:ATP binding"/>
    <property type="evidence" value="ECO:0007669"/>
    <property type="project" value="UniProtKB-UniRule"/>
</dbReference>
<dbReference type="GO" id="GO:0004820">
    <property type="term" value="F:glycine-tRNA ligase activity"/>
    <property type="evidence" value="ECO:0007669"/>
    <property type="project" value="UniProtKB-UniRule"/>
</dbReference>
<dbReference type="GO" id="GO:0006420">
    <property type="term" value="P:arginyl-tRNA aminoacylation"/>
    <property type="evidence" value="ECO:0007669"/>
    <property type="project" value="InterPro"/>
</dbReference>
<dbReference type="GO" id="GO:0006426">
    <property type="term" value="P:glycyl-tRNA aminoacylation"/>
    <property type="evidence" value="ECO:0007669"/>
    <property type="project" value="UniProtKB-UniRule"/>
</dbReference>
<dbReference type="HAMAP" id="MF_00255">
    <property type="entry name" value="Gly_tRNA_synth_beta"/>
    <property type="match status" value="1"/>
</dbReference>
<dbReference type="InterPro" id="IPR008909">
    <property type="entry name" value="DALR_anticod-bd"/>
</dbReference>
<dbReference type="InterPro" id="IPR015944">
    <property type="entry name" value="Gly-tRNA-synth_bsu"/>
</dbReference>
<dbReference type="InterPro" id="IPR006194">
    <property type="entry name" value="Gly-tRNA-synth_heterodimer"/>
</dbReference>
<dbReference type="NCBIfam" id="TIGR00211">
    <property type="entry name" value="glyS"/>
    <property type="match status" value="1"/>
</dbReference>
<dbReference type="PANTHER" id="PTHR30075:SF2">
    <property type="entry name" value="GLYCINE--TRNA LIGASE, CHLOROPLASTIC_MITOCHONDRIAL 2"/>
    <property type="match status" value="1"/>
</dbReference>
<dbReference type="PANTHER" id="PTHR30075">
    <property type="entry name" value="GLYCYL-TRNA SYNTHETASE"/>
    <property type="match status" value="1"/>
</dbReference>
<dbReference type="Pfam" id="PF05746">
    <property type="entry name" value="DALR_1"/>
    <property type="match status" value="1"/>
</dbReference>
<dbReference type="Pfam" id="PF02092">
    <property type="entry name" value="tRNA_synt_2f"/>
    <property type="match status" value="1"/>
</dbReference>
<dbReference type="PRINTS" id="PR01045">
    <property type="entry name" value="TRNASYNTHGB"/>
</dbReference>
<dbReference type="SUPFAM" id="SSF109604">
    <property type="entry name" value="HD-domain/PDEase-like"/>
    <property type="match status" value="1"/>
</dbReference>
<dbReference type="PROSITE" id="PS50861">
    <property type="entry name" value="AA_TRNA_LIGASE_II_GLYAB"/>
    <property type="match status" value="1"/>
</dbReference>
<gene>
    <name evidence="1" type="primary">glyS</name>
    <name type="ordered locus">SFV_3982</name>
</gene>
<evidence type="ECO:0000255" key="1">
    <source>
        <dbReference type="HAMAP-Rule" id="MF_00255"/>
    </source>
</evidence>